<protein>
    <recommendedName>
        <fullName evidence="1">Replication protein E1</fullName>
        <ecNumber evidence="1">5.6.2.4</ecNumber>
    </recommendedName>
    <alternativeName>
        <fullName evidence="1">ATP-dependent helicase E1</fullName>
    </alternativeName>
    <alternativeName>
        <fullName evidence="1">DNA 3'-5' helicase E1</fullName>
    </alternativeName>
</protein>
<reference key="1">
    <citation type="journal article" date="1994" name="Curr. Top. Microbiol. Immunol.">
        <title>Primer-directed sequencing of human papillomavirus types.</title>
        <authorList>
            <person name="Delius H."/>
            <person name="Hofmann B."/>
        </authorList>
    </citation>
    <scope>NUCLEOTIDE SEQUENCE [GENOMIC DNA]</scope>
</reference>
<feature type="chain" id="PRO_0000133142" description="Replication protein E1">
    <location>
        <begin position="1"/>
        <end position="643"/>
    </location>
</feature>
<feature type="domain" description="SF3 helicase" evidence="1">
    <location>
        <begin position="444"/>
        <end position="594"/>
    </location>
</feature>
<feature type="region of interest" description="Disordered" evidence="2">
    <location>
        <begin position="152"/>
        <end position="178"/>
    </location>
</feature>
<feature type="region of interest" description="DNA-binding region" evidence="1">
    <location>
        <begin position="179"/>
        <end position="345"/>
    </location>
</feature>
<feature type="short sequence motif" description="Nuclear localization signal" evidence="1">
    <location>
        <begin position="86"/>
        <end position="88"/>
    </location>
</feature>
<feature type="short sequence motif" description="Nuclear export signal" evidence="1">
    <location>
        <begin position="109"/>
        <end position="118"/>
    </location>
</feature>
<feature type="compositionally biased region" description="Polar residues" evidence="2">
    <location>
        <begin position="152"/>
        <end position="175"/>
    </location>
</feature>
<feature type="binding site" evidence="1">
    <location>
        <begin position="470"/>
        <end position="477"/>
    </location>
    <ligand>
        <name>ATP</name>
        <dbReference type="ChEBI" id="CHEBI:30616"/>
    </ligand>
</feature>
<feature type="modified residue" description="Phosphoserine; by host" evidence="1">
    <location>
        <position position="110"/>
    </location>
</feature>
<feature type="cross-link" description="Glycyl lysine isopeptide (Lys-Gly) (interchain with G-Cter in SUMO)" evidence="1">
    <location>
        <position position="551"/>
    </location>
</feature>
<comment type="function">
    <text evidence="1">ATP-dependent DNA 3'-5' helicase required for initiation of viral DNA replication. It forms a complex with the viral E2 protein. The E1-E2 complex binds to the replication origin which contains binding sites for both proteins. During the initial step, a dimer of E1 interacts with a dimer of protein E2 leading to a complex that binds the viral origin of replication with high specificity. Then, a second dimer of E1 displaces the E2 dimer in an ATP-dependent manner to form the E1 tetramer. Following this, two E1 monomers are added to each half of the site, which results in the formation of two E1 trimers on the viral ori. Subsequently, two hexamers will be created. The double hexamer acts as a bi-directional helicase machinery and unwinds the viral DNA and then recruits the host DNA polymerase to start replication.</text>
</comment>
<comment type="catalytic activity">
    <reaction evidence="1">
        <text>Couples ATP hydrolysis with the unwinding of duplex DNA by translocating in the 3'-5' direction.</text>
        <dbReference type="EC" id="5.6.2.4"/>
    </reaction>
</comment>
<comment type="catalytic activity">
    <reaction evidence="1">
        <text>ATP + H2O = ADP + phosphate + H(+)</text>
        <dbReference type="Rhea" id="RHEA:13065"/>
        <dbReference type="ChEBI" id="CHEBI:15377"/>
        <dbReference type="ChEBI" id="CHEBI:15378"/>
        <dbReference type="ChEBI" id="CHEBI:30616"/>
        <dbReference type="ChEBI" id="CHEBI:43474"/>
        <dbReference type="ChEBI" id="CHEBI:456216"/>
        <dbReference type="EC" id="5.6.2.4"/>
    </reaction>
</comment>
<comment type="subunit">
    <text evidence="1">Can form hexamers. Interacts with E2 protein; this interaction increases E1 DNA binding specificity. Interacts with host DNA polymerase subunit POLA2. Interacts with host single stranded DNA-binding protein RPA1. Interacts with host TOP1; this interaction stimulates the enzymatic activity of TOP1.</text>
</comment>
<comment type="subcellular location">
    <subcellularLocation>
        <location evidence="1">Host nucleus</location>
    </subcellularLocation>
</comment>
<comment type="PTM">
    <text evidence="1">Phosphorylated.</text>
</comment>
<comment type="PTM">
    <text evidence="1">Sumoylated.</text>
</comment>
<comment type="similarity">
    <text evidence="1">Belongs to the papillomaviridae E1 protein family.</text>
</comment>
<organism>
    <name type="scientific">Human papillomavirus 45</name>
    <dbReference type="NCBI Taxonomy" id="10593"/>
    <lineage>
        <taxon>Viruses</taxon>
        <taxon>Monodnaviria</taxon>
        <taxon>Shotokuvirae</taxon>
        <taxon>Cossaviricota</taxon>
        <taxon>Papovaviricetes</taxon>
        <taxon>Zurhausenvirales</taxon>
        <taxon>Papillomaviridae</taxon>
        <taxon>Firstpapillomavirinae</taxon>
        <taxon>Alphapapillomavirus</taxon>
        <taxon>Alphapapillomavirus 7</taxon>
    </lineage>
</organism>
<evidence type="ECO:0000255" key="1">
    <source>
        <dbReference type="HAMAP-Rule" id="MF_04000"/>
    </source>
</evidence>
<evidence type="ECO:0000256" key="2">
    <source>
        <dbReference type="SAM" id="MobiDB-lite"/>
    </source>
</evidence>
<dbReference type="EC" id="5.6.2.4" evidence="1"/>
<dbReference type="EMBL" id="X74479">
    <property type="protein sequence ID" value="CAA52575.1"/>
    <property type="molecule type" value="Genomic_DNA"/>
</dbReference>
<dbReference type="PIR" id="S36563">
    <property type="entry name" value="S36563"/>
</dbReference>
<dbReference type="SMR" id="P36728"/>
<dbReference type="Proteomes" id="UP000008695">
    <property type="component" value="Genome"/>
</dbReference>
<dbReference type="GO" id="GO:0042025">
    <property type="term" value="C:host cell nucleus"/>
    <property type="evidence" value="ECO:0007669"/>
    <property type="project" value="UniProtKB-SubCell"/>
</dbReference>
<dbReference type="GO" id="GO:0005524">
    <property type="term" value="F:ATP binding"/>
    <property type="evidence" value="ECO:0007669"/>
    <property type="project" value="UniProtKB-UniRule"/>
</dbReference>
<dbReference type="GO" id="GO:0016887">
    <property type="term" value="F:ATP hydrolysis activity"/>
    <property type="evidence" value="ECO:0007669"/>
    <property type="project" value="RHEA"/>
</dbReference>
<dbReference type="GO" id="GO:0003677">
    <property type="term" value="F:DNA binding"/>
    <property type="evidence" value="ECO:0007669"/>
    <property type="project" value="UniProtKB-UniRule"/>
</dbReference>
<dbReference type="GO" id="GO:0003678">
    <property type="term" value="F:DNA helicase activity"/>
    <property type="evidence" value="ECO:0007669"/>
    <property type="project" value="UniProtKB-UniRule"/>
</dbReference>
<dbReference type="GO" id="GO:0006260">
    <property type="term" value="P:DNA replication"/>
    <property type="evidence" value="ECO:0007669"/>
    <property type="project" value="UniProtKB-UniRule"/>
</dbReference>
<dbReference type="FunFam" id="3.40.1310.10:FF:000001">
    <property type="entry name" value="Replication protein E1"/>
    <property type="match status" value="1"/>
</dbReference>
<dbReference type="Gene3D" id="3.40.1310.10">
    <property type="match status" value="1"/>
</dbReference>
<dbReference type="Gene3D" id="3.40.50.300">
    <property type="entry name" value="P-loop containing nucleotide triphosphate hydrolases"/>
    <property type="match status" value="1"/>
</dbReference>
<dbReference type="Gene3D" id="1.10.10.510">
    <property type="entry name" value="Zinc finger, large T-antigen D1 domain"/>
    <property type="match status" value="1"/>
</dbReference>
<dbReference type="HAMAP" id="MF_04000">
    <property type="entry name" value="PPV_E1"/>
    <property type="match status" value="1"/>
</dbReference>
<dbReference type="InterPro" id="IPR014015">
    <property type="entry name" value="Helicase_SF3_DNA-vir"/>
</dbReference>
<dbReference type="InterPro" id="IPR027417">
    <property type="entry name" value="P-loop_NTPase"/>
</dbReference>
<dbReference type="InterPro" id="IPR001177">
    <property type="entry name" value="PPV_DNA_helicase_E1_C"/>
</dbReference>
<dbReference type="InterPro" id="IPR014000">
    <property type="entry name" value="PPV_DNA_helicase_E1_N"/>
</dbReference>
<dbReference type="InterPro" id="IPR046832">
    <property type="entry name" value="PPV_E1_DBD"/>
</dbReference>
<dbReference type="InterPro" id="IPR046935">
    <property type="entry name" value="PPV_E1_DBD_sf"/>
</dbReference>
<dbReference type="InterPro" id="IPR016393">
    <property type="entry name" value="Rep_E1_papillomaV"/>
</dbReference>
<dbReference type="InterPro" id="IPR037102">
    <property type="entry name" value="Znf_lg_T-Ag_D1_dom_sf"/>
</dbReference>
<dbReference type="Pfam" id="PF00519">
    <property type="entry name" value="PPV_E1_C"/>
    <property type="match status" value="1"/>
</dbReference>
<dbReference type="Pfam" id="PF20450">
    <property type="entry name" value="PPV_E1_DBD"/>
    <property type="match status" value="1"/>
</dbReference>
<dbReference type="Pfam" id="PF00524">
    <property type="entry name" value="PPV_E1_N"/>
    <property type="match status" value="1"/>
</dbReference>
<dbReference type="PIRSF" id="PIRSF003383">
    <property type="entry name" value="Rep_E1_papillomaV"/>
    <property type="match status" value="1"/>
</dbReference>
<dbReference type="SUPFAM" id="SSF55464">
    <property type="entry name" value="Origin of replication-binding domain, RBD-like"/>
    <property type="match status" value="1"/>
</dbReference>
<dbReference type="SUPFAM" id="SSF52540">
    <property type="entry name" value="P-loop containing nucleoside triphosphate hydrolases"/>
    <property type="match status" value="1"/>
</dbReference>
<dbReference type="PROSITE" id="PS51206">
    <property type="entry name" value="SF3_HELICASE_1"/>
    <property type="match status" value="1"/>
</dbReference>
<name>VE1_HPV45</name>
<accession>P36728</accession>
<gene>
    <name evidence="1" type="primary">E1</name>
</gene>
<proteinExistence type="inferred from homology"/>
<sequence>MADPEGTDGEGTGCNGWFFVETIVEKKTGDVISDDEDETATDTGSDMVDFIDTQLSICEQAEQETAQALFHAQEVQNDAQVLHLLKRKFAGGSKENSPLGEQLSVDTDLSPRLQEISLNSGHKKAKRRLFTISDSGYGCSEVEAAETQVTVNTNAENGGSVHSTQSSGGDSSDNAENVDPHCSITELKELLQASNKKAAMLAVFKDIYGLSFTDLVRNFKSDKTTCTDWVMAIFGVNPTVAEGFKTLIKPATLYAHIQCLDCKWGVLILALLRYKCGKNRLTVAKGLSTLLHVPETCMLIEPPKLRSSVAALYWYRTGISNISEVSGDTPEWIQRLTIIQHGIDDSNFDLSDMVQWAFDNDLTDESDMAFQYAQLADCNSNAAAFLKSNCQAKYLKDCAVMCRHYKRAQKRQMNMSQWIKYRCSKIDEGGDWRPIVQFLRYQGVEFISFLRALKEFLKGTPKKNCILLYGPANTGKSYFGMSFIHFLQGAIISFVNSNSHFWLEPLADTKVAMLDDATHTCWTYFDNYMRNALDGNPISIDRKHKPLLQLKCPPILLTSNIDPAKDNKWPYLESRVTVFTFPHAFPFDKNGNPVYEINDKNWKCFFERTWSRLDLHEDDEDADTEGIPFGTFKCVTGQNTRPL</sequence>
<organismHost>
    <name type="scientific">Homo sapiens</name>
    <name type="common">Human</name>
    <dbReference type="NCBI Taxonomy" id="9606"/>
</organismHost>
<keyword id="KW-0067">ATP-binding</keyword>
<keyword id="KW-0235">DNA replication</keyword>
<keyword id="KW-0238">DNA-binding</keyword>
<keyword id="KW-0244">Early protein</keyword>
<keyword id="KW-0347">Helicase</keyword>
<keyword id="KW-1048">Host nucleus</keyword>
<keyword id="KW-0378">Hydrolase</keyword>
<keyword id="KW-0413">Isomerase</keyword>
<keyword id="KW-1017">Isopeptide bond</keyword>
<keyword id="KW-0547">Nucleotide-binding</keyword>
<keyword id="KW-0597">Phosphoprotein</keyword>
<keyword id="KW-0832">Ubl conjugation</keyword>